<organism>
    <name type="scientific">Nostoc sp. (strain PCC 7120 / SAG 25.82 / UTEX 2576)</name>
    <dbReference type="NCBI Taxonomy" id="103690"/>
    <lineage>
        <taxon>Bacteria</taxon>
        <taxon>Bacillati</taxon>
        <taxon>Cyanobacteriota</taxon>
        <taxon>Cyanophyceae</taxon>
        <taxon>Nostocales</taxon>
        <taxon>Nostocaceae</taxon>
        <taxon>Nostoc</taxon>
    </lineage>
</organism>
<dbReference type="EC" id="7.4.2.8" evidence="1"/>
<dbReference type="EMBL" id="BA000019">
    <property type="protein sequence ID" value="BAB76550.1"/>
    <property type="molecule type" value="Genomic_DNA"/>
</dbReference>
<dbReference type="PIR" id="AC2412">
    <property type="entry name" value="AC2412"/>
</dbReference>
<dbReference type="RefSeq" id="WP_010998979.1">
    <property type="nucleotide sequence ID" value="NZ_RSCN01000037.1"/>
</dbReference>
<dbReference type="SMR" id="Q8YMS8"/>
<dbReference type="STRING" id="103690.gene:10496905"/>
<dbReference type="KEGG" id="ana:alr4851"/>
<dbReference type="eggNOG" id="COG0653">
    <property type="taxonomic scope" value="Bacteria"/>
</dbReference>
<dbReference type="OrthoDB" id="9805579at2"/>
<dbReference type="Proteomes" id="UP000002483">
    <property type="component" value="Chromosome"/>
</dbReference>
<dbReference type="GO" id="GO:0031522">
    <property type="term" value="C:cell envelope Sec protein transport complex"/>
    <property type="evidence" value="ECO:0007669"/>
    <property type="project" value="TreeGrafter"/>
</dbReference>
<dbReference type="GO" id="GO:0005829">
    <property type="term" value="C:cytosol"/>
    <property type="evidence" value="ECO:0007669"/>
    <property type="project" value="TreeGrafter"/>
</dbReference>
<dbReference type="GO" id="GO:0031676">
    <property type="term" value="C:plasma membrane-derived thylakoid membrane"/>
    <property type="evidence" value="ECO:0007669"/>
    <property type="project" value="UniProtKB-SubCell"/>
</dbReference>
<dbReference type="GO" id="GO:0005524">
    <property type="term" value="F:ATP binding"/>
    <property type="evidence" value="ECO:0007669"/>
    <property type="project" value="UniProtKB-UniRule"/>
</dbReference>
<dbReference type="GO" id="GO:0008564">
    <property type="term" value="F:protein-exporting ATPase activity"/>
    <property type="evidence" value="ECO:0007669"/>
    <property type="project" value="UniProtKB-EC"/>
</dbReference>
<dbReference type="GO" id="GO:0065002">
    <property type="term" value="P:intracellular protein transmembrane transport"/>
    <property type="evidence" value="ECO:0007669"/>
    <property type="project" value="UniProtKB-UniRule"/>
</dbReference>
<dbReference type="GO" id="GO:0017038">
    <property type="term" value="P:protein import"/>
    <property type="evidence" value="ECO:0007669"/>
    <property type="project" value="InterPro"/>
</dbReference>
<dbReference type="GO" id="GO:0006605">
    <property type="term" value="P:protein targeting"/>
    <property type="evidence" value="ECO:0007669"/>
    <property type="project" value="UniProtKB-UniRule"/>
</dbReference>
<dbReference type="GO" id="GO:0043952">
    <property type="term" value="P:protein transport by the Sec complex"/>
    <property type="evidence" value="ECO:0007669"/>
    <property type="project" value="TreeGrafter"/>
</dbReference>
<dbReference type="CDD" id="cd17928">
    <property type="entry name" value="DEXDc_SecA"/>
    <property type="match status" value="1"/>
</dbReference>
<dbReference type="CDD" id="cd18803">
    <property type="entry name" value="SF2_C_secA"/>
    <property type="match status" value="1"/>
</dbReference>
<dbReference type="FunFam" id="3.90.1440.10:FF:000003">
    <property type="entry name" value="Preprotein translocase SecA subunit"/>
    <property type="match status" value="1"/>
</dbReference>
<dbReference type="FunFam" id="3.40.50.300:FF:000429">
    <property type="entry name" value="Preprotein translocase subunit SecA"/>
    <property type="match status" value="1"/>
</dbReference>
<dbReference type="FunFam" id="1.10.3060.10:FF:000003">
    <property type="entry name" value="Protein translocase subunit SecA"/>
    <property type="match status" value="1"/>
</dbReference>
<dbReference type="FunFam" id="3.40.50.300:FF:000334">
    <property type="entry name" value="Protein translocase subunit SecA"/>
    <property type="match status" value="1"/>
</dbReference>
<dbReference type="Gene3D" id="1.10.3060.10">
    <property type="entry name" value="Helical scaffold and wing domains of SecA"/>
    <property type="match status" value="1"/>
</dbReference>
<dbReference type="Gene3D" id="3.40.50.300">
    <property type="entry name" value="P-loop containing nucleotide triphosphate hydrolases"/>
    <property type="match status" value="2"/>
</dbReference>
<dbReference type="Gene3D" id="3.90.1440.10">
    <property type="entry name" value="SecA, preprotein cross-linking domain"/>
    <property type="match status" value="1"/>
</dbReference>
<dbReference type="HAMAP" id="MF_01382">
    <property type="entry name" value="SecA"/>
    <property type="match status" value="1"/>
</dbReference>
<dbReference type="InterPro" id="IPR014001">
    <property type="entry name" value="Helicase_ATP-bd"/>
</dbReference>
<dbReference type="InterPro" id="IPR027417">
    <property type="entry name" value="P-loop_NTPase"/>
</dbReference>
<dbReference type="InterPro" id="IPR000185">
    <property type="entry name" value="SecA"/>
</dbReference>
<dbReference type="InterPro" id="IPR020937">
    <property type="entry name" value="SecA_CS"/>
</dbReference>
<dbReference type="InterPro" id="IPR011115">
    <property type="entry name" value="SecA_DEAD"/>
</dbReference>
<dbReference type="InterPro" id="IPR014018">
    <property type="entry name" value="SecA_motor_DEAD"/>
</dbReference>
<dbReference type="InterPro" id="IPR011130">
    <property type="entry name" value="SecA_preprotein_X-link_dom"/>
</dbReference>
<dbReference type="InterPro" id="IPR044722">
    <property type="entry name" value="SecA_SF2_C"/>
</dbReference>
<dbReference type="InterPro" id="IPR011116">
    <property type="entry name" value="SecA_Wing/Scaffold"/>
</dbReference>
<dbReference type="InterPro" id="IPR036266">
    <property type="entry name" value="SecA_Wing/Scaffold_sf"/>
</dbReference>
<dbReference type="InterPro" id="IPR036670">
    <property type="entry name" value="SecA_X-link_sf"/>
</dbReference>
<dbReference type="NCBIfam" id="TIGR00963">
    <property type="entry name" value="secA"/>
    <property type="match status" value="1"/>
</dbReference>
<dbReference type="PANTHER" id="PTHR30612:SF0">
    <property type="entry name" value="CHLOROPLAST PROTEIN-TRANSPORTING ATPASE"/>
    <property type="match status" value="1"/>
</dbReference>
<dbReference type="PANTHER" id="PTHR30612">
    <property type="entry name" value="SECA INNER MEMBRANE COMPONENT OF SEC PROTEIN SECRETION SYSTEM"/>
    <property type="match status" value="1"/>
</dbReference>
<dbReference type="Pfam" id="PF21090">
    <property type="entry name" value="P-loop_SecA"/>
    <property type="match status" value="1"/>
</dbReference>
<dbReference type="Pfam" id="PF07517">
    <property type="entry name" value="SecA_DEAD"/>
    <property type="match status" value="1"/>
</dbReference>
<dbReference type="Pfam" id="PF01043">
    <property type="entry name" value="SecA_PP_bind"/>
    <property type="match status" value="1"/>
</dbReference>
<dbReference type="Pfam" id="PF07516">
    <property type="entry name" value="SecA_SW"/>
    <property type="match status" value="1"/>
</dbReference>
<dbReference type="PRINTS" id="PR00906">
    <property type="entry name" value="SECA"/>
</dbReference>
<dbReference type="SMART" id="SM00957">
    <property type="entry name" value="SecA_DEAD"/>
    <property type="match status" value="1"/>
</dbReference>
<dbReference type="SMART" id="SM00958">
    <property type="entry name" value="SecA_PP_bind"/>
    <property type="match status" value="1"/>
</dbReference>
<dbReference type="SUPFAM" id="SSF81886">
    <property type="entry name" value="Helical scaffold and wing domains of SecA"/>
    <property type="match status" value="1"/>
</dbReference>
<dbReference type="SUPFAM" id="SSF52540">
    <property type="entry name" value="P-loop containing nucleoside triphosphate hydrolases"/>
    <property type="match status" value="2"/>
</dbReference>
<dbReference type="SUPFAM" id="SSF81767">
    <property type="entry name" value="Pre-protein crosslinking domain of SecA"/>
    <property type="match status" value="1"/>
</dbReference>
<dbReference type="PROSITE" id="PS01312">
    <property type="entry name" value="SECA"/>
    <property type="match status" value="1"/>
</dbReference>
<dbReference type="PROSITE" id="PS51196">
    <property type="entry name" value="SECA_MOTOR_DEAD"/>
    <property type="match status" value="1"/>
</dbReference>
<reference key="1">
    <citation type="journal article" date="2001" name="DNA Res.">
        <title>Complete genomic sequence of the filamentous nitrogen-fixing cyanobacterium Anabaena sp. strain PCC 7120.</title>
        <authorList>
            <person name="Kaneko T."/>
            <person name="Nakamura Y."/>
            <person name="Wolk C.P."/>
            <person name="Kuritz T."/>
            <person name="Sasamoto S."/>
            <person name="Watanabe A."/>
            <person name="Iriguchi M."/>
            <person name="Ishikawa A."/>
            <person name="Kawashima K."/>
            <person name="Kimura T."/>
            <person name="Kishida Y."/>
            <person name="Kohara M."/>
            <person name="Matsumoto M."/>
            <person name="Matsuno A."/>
            <person name="Muraki A."/>
            <person name="Nakazaki N."/>
            <person name="Shimpo S."/>
            <person name="Sugimoto M."/>
            <person name="Takazawa M."/>
            <person name="Yamada M."/>
            <person name="Yasuda M."/>
            <person name="Tabata S."/>
        </authorList>
    </citation>
    <scope>NUCLEOTIDE SEQUENCE [LARGE SCALE GENOMIC DNA]</scope>
    <source>
        <strain>PCC 7120 / SAG 25.82 / UTEX 2576</strain>
    </source>
</reference>
<gene>
    <name evidence="1" type="primary">secA</name>
    <name type="ordered locus">alr4851</name>
</gene>
<accession>Q8YMS8</accession>
<feature type="chain" id="PRO_0000318305" description="Protein translocase subunit SecA">
    <location>
        <begin position="1"/>
        <end position="930"/>
    </location>
</feature>
<feature type="binding site" evidence="1">
    <location>
        <position position="83"/>
    </location>
    <ligand>
        <name>ATP</name>
        <dbReference type="ChEBI" id="CHEBI:30616"/>
    </ligand>
</feature>
<feature type="binding site" evidence="1">
    <location>
        <begin position="101"/>
        <end position="105"/>
    </location>
    <ligand>
        <name>ATP</name>
        <dbReference type="ChEBI" id="CHEBI:30616"/>
    </ligand>
</feature>
<feature type="binding site" evidence="1">
    <location>
        <position position="491"/>
    </location>
    <ligand>
        <name>ATP</name>
        <dbReference type="ChEBI" id="CHEBI:30616"/>
    </ligand>
</feature>
<sequence>MLKLLLGDPNARKLKKYQPYITEINLLEEDIKVLSDEDLKGKTAEFKQRLAKGETLDDILPEAFAVVREAGRRVLGLRHFDVQMLGGVILHSGQIAEMKTGEGKTLVATLPSYLNALTGKGVHVITVNDYLARRDAEWMGQVHRFLGLSVGLIQSSMTPSERQKNYECDITYVTNSEVGFDYLRDNMATSMADVVQRPFNYCVIDEVDSILVDEARTPLIISGQVERPTEKYVQAAEIALTLQKDEHYDVDEKARNVLLTDEGFAQAEELLGVTDLFDPEDPWAHFVFNAIKAKELFLKDVNYIVRNGEVVIVDEFTGRVLPGRRWSDGLHQAIEAKEHVDIQPETQTLATITYQNLFLLYPKLGGMTGTAKTEEAEFERIYKLEVTIIPTNRIRRREDLSDLVFKKEIGKWQAIARECAEMHELGRPVLVGTTSVEKSEYLSQLLREQGIPHELLNARPENVEREAEIVAQAGRRGAVTIATNMAGRGTDIILGGNSEYMARLKLREYFMPRIVRPDDEDVFGVQRAAGLPTGHGAGQGFVPGKKVKTWKASPEIFPTQLSKEAEQLLKEAVDFAVREYGDRSLPELEAEDKVAVAAEKAPTDDSVIQKLRDAYNRIKHEYEEFTSTEHDEVVGRGGLHVIGTERHESRRIDNQLRGRAGRQGDPGSTRFFLSLEDNLLRIFGGDRVAGLMEAFNVEDDMPIESGMLTRSLEGAQRKVETYYYDIRKQVFEYDEVMNNQRRAIYAERRRVLEGQDLKEQVIKYAEKTMDEIVDYYINVDLPSEEWELDKLVDKVKEFVYLLSDMQANQLEDMGVSEIKAFLHEQVRIAYDLKEAQIDQIQPGLMRQAERFFILQRIDTLWREHLQQMDALRESVGLRGYGQKDPLIEYKSEGYELFLDMMVNIRRDVVYSLFMFQPQPQPVVQTSSEMV</sequence>
<name>SECA_NOSS1</name>
<proteinExistence type="inferred from homology"/>
<evidence type="ECO:0000255" key="1">
    <source>
        <dbReference type="HAMAP-Rule" id="MF_01382"/>
    </source>
</evidence>
<keyword id="KW-0067">ATP-binding</keyword>
<keyword id="KW-0997">Cell inner membrane</keyword>
<keyword id="KW-1003">Cell membrane</keyword>
<keyword id="KW-0963">Cytoplasm</keyword>
<keyword id="KW-0472">Membrane</keyword>
<keyword id="KW-0547">Nucleotide-binding</keyword>
<keyword id="KW-0653">Protein transport</keyword>
<keyword id="KW-1185">Reference proteome</keyword>
<keyword id="KW-0793">Thylakoid</keyword>
<keyword id="KW-1278">Translocase</keyword>
<keyword id="KW-0811">Translocation</keyword>
<keyword id="KW-0813">Transport</keyword>
<protein>
    <recommendedName>
        <fullName evidence="1">Protein translocase subunit SecA</fullName>
        <ecNumber evidence="1">7.4.2.8</ecNumber>
    </recommendedName>
</protein>
<comment type="function">
    <text evidence="1">Part of the Sec protein translocase complex. Interacts with the SecYEG preprotein conducting channel. Has a central role in coupling the hydrolysis of ATP to the transfer of proteins into and across the cell membrane, serving as an ATP-driven molecular motor driving the stepwise translocation of polypeptide chains across the membrane.</text>
</comment>
<comment type="function">
    <text evidence="1">Probably participates in protein translocation into and across both the cytoplasmic and thylakoid membranes in cyanobacterial cells.</text>
</comment>
<comment type="catalytic activity">
    <reaction evidence="1">
        <text>ATP + H2O + cellular proteinSide 1 = ADP + phosphate + cellular proteinSide 2.</text>
        <dbReference type="EC" id="7.4.2.8"/>
    </reaction>
</comment>
<comment type="subunit">
    <text evidence="1">Monomer and homodimer. Part of the essential Sec protein translocation apparatus which comprises SecA, SecYEG and auxiliary proteins SecDF. Other proteins may also be involved.</text>
</comment>
<comment type="subcellular location">
    <subcellularLocation>
        <location evidence="1">Cell inner membrane</location>
        <topology evidence="1">Peripheral membrane protein</topology>
        <orientation evidence="1">Cytoplasmic side</orientation>
    </subcellularLocation>
    <subcellularLocation>
        <location evidence="1">Cellular thylakoid membrane</location>
        <topology evidence="1">Peripheral membrane protein</topology>
        <orientation evidence="1">Cytoplasmic side</orientation>
    </subcellularLocation>
    <subcellularLocation>
        <location evidence="1">Cytoplasm</location>
    </subcellularLocation>
</comment>
<comment type="similarity">
    <text evidence="1">Belongs to the SecA family.</text>
</comment>